<keyword id="KW-0007">Acetylation</keyword>
<keyword id="KW-0025">Alternative splicing</keyword>
<keyword id="KW-0256">Endoplasmic reticulum</keyword>
<keyword id="KW-0472">Membrane</keyword>
<keyword id="KW-0597">Phosphoprotein</keyword>
<keyword id="KW-1185">Reference proteome</keyword>
<keyword id="KW-0812">Transmembrane</keyword>
<keyword id="KW-1133">Transmembrane helix</keyword>
<organism>
    <name type="scientific">Mus musculus</name>
    <name type="common">Mouse</name>
    <dbReference type="NCBI Taxonomy" id="10090"/>
    <lineage>
        <taxon>Eukaryota</taxon>
        <taxon>Metazoa</taxon>
        <taxon>Chordata</taxon>
        <taxon>Craniata</taxon>
        <taxon>Vertebrata</taxon>
        <taxon>Euteleostomi</taxon>
        <taxon>Mammalia</taxon>
        <taxon>Eutheria</taxon>
        <taxon>Euarchontoglires</taxon>
        <taxon>Glires</taxon>
        <taxon>Rodentia</taxon>
        <taxon>Myomorpha</taxon>
        <taxon>Muroidea</taxon>
        <taxon>Muridae</taxon>
        <taxon>Murinae</taxon>
        <taxon>Mus</taxon>
        <taxon>Mus</taxon>
    </lineage>
</organism>
<accession>Q9DCF9</accession>
<accession>Q8C0Z8</accession>
<dbReference type="EMBL" id="AK002818">
    <property type="protein sequence ID" value="BAB22381.1"/>
    <property type="molecule type" value="mRNA"/>
</dbReference>
<dbReference type="EMBL" id="AK029353">
    <property type="protein sequence ID" value="BAC26413.1"/>
    <property type="molecule type" value="mRNA"/>
</dbReference>
<dbReference type="EMBL" id="AK076235">
    <property type="protein sequence ID" value="BAC36268.1"/>
    <property type="molecule type" value="mRNA"/>
</dbReference>
<dbReference type="EMBL" id="AK088555">
    <property type="protein sequence ID" value="BAC40420.1"/>
    <property type="molecule type" value="mRNA"/>
</dbReference>
<dbReference type="EMBL" id="BC011111">
    <property type="protein sequence ID" value="AAH11111.1"/>
    <property type="molecule type" value="mRNA"/>
</dbReference>
<dbReference type="CCDS" id="CCDS17386.1">
    <molecule id="Q9DCF9-1"/>
</dbReference>
<dbReference type="RefSeq" id="NP_080431.1">
    <molecule id="Q9DCF9-1"/>
    <property type="nucleotide sequence ID" value="NM_026155.3"/>
</dbReference>
<dbReference type="SMR" id="Q9DCF9"/>
<dbReference type="BioGRID" id="212185">
    <property type="interactions" value="5"/>
</dbReference>
<dbReference type="FunCoup" id="Q9DCF9">
    <property type="interactions" value="2180"/>
</dbReference>
<dbReference type="IntAct" id="Q9DCF9">
    <property type="interactions" value="1"/>
</dbReference>
<dbReference type="STRING" id="10090.ENSMUSP00000029414"/>
<dbReference type="GlyGen" id="Q9DCF9">
    <property type="glycosylation" value="1 site, 1 O-linked glycan (1 site)"/>
</dbReference>
<dbReference type="iPTMnet" id="Q9DCF9"/>
<dbReference type="PhosphoSitePlus" id="Q9DCF9"/>
<dbReference type="jPOST" id="Q9DCF9"/>
<dbReference type="PaxDb" id="10090-ENSMUSP00000029414"/>
<dbReference type="ProteomicsDB" id="258744">
    <molecule id="Q9DCF9-1"/>
</dbReference>
<dbReference type="ProteomicsDB" id="258745">
    <molecule id="Q9DCF9-2"/>
</dbReference>
<dbReference type="Pumba" id="Q9DCF9"/>
<dbReference type="Antibodypedia" id="18400">
    <property type="antibodies" value="60 antibodies from 19 providers"/>
</dbReference>
<dbReference type="DNASU" id="67437"/>
<dbReference type="Ensembl" id="ENSMUST00000029414.12">
    <molecule id="Q9DCF9-1"/>
    <property type="protein sequence ID" value="ENSMUSP00000029414.6"/>
    <property type="gene ID" value="ENSMUSG00000027828.13"/>
</dbReference>
<dbReference type="Ensembl" id="ENSMUST00000119896.2">
    <molecule id="Q9DCF9-2"/>
    <property type="protein sequence ID" value="ENSMUSP00000113831.2"/>
    <property type="gene ID" value="ENSMUSG00000027828.13"/>
</dbReference>
<dbReference type="GeneID" id="67437"/>
<dbReference type="KEGG" id="mmu:67437"/>
<dbReference type="UCSC" id="uc008pkn.1">
    <molecule id="Q9DCF9-1"/>
    <property type="organism name" value="mouse"/>
</dbReference>
<dbReference type="UCSC" id="uc008pko.1">
    <molecule id="Q9DCF9-2"/>
    <property type="organism name" value="mouse"/>
</dbReference>
<dbReference type="AGR" id="MGI:1914687"/>
<dbReference type="CTD" id="6747"/>
<dbReference type="MGI" id="MGI:1914687">
    <property type="gene designation" value="Ssr3"/>
</dbReference>
<dbReference type="VEuPathDB" id="HostDB:ENSMUSG00000027828"/>
<dbReference type="eggNOG" id="KOG4490">
    <property type="taxonomic scope" value="Eukaryota"/>
</dbReference>
<dbReference type="GeneTree" id="ENSGT00390000000970"/>
<dbReference type="HOGENOM" id="CLU_092935_0_0_1"/>
<dbReference type="InParanoid" id="Q9DCF9"/>
<dbReference type="OMA" id="PLWLFWR"/>
<dbReference type="OrthoDB" id="10059529at2759"/>
<dbReference type="PhylomeDB" id="Q9DCF9"/>
<dbReference type="TreeFam" id="TF314998"/>
<dbReference type="BioGRID-ORCS" id="67437">
    <property type="hits" value="5 hits in 77 CRISPR screens"/>
</dbReference>
<dbReference type="CD-CODE" id="CE726F99">
    <property type="entry name" value="Postsynaptic density"/>
</dbReference>
<dbReference type="ChiTaRS" id="Ssr3">
    <property type="organism name" value="mouse"/>
</dbReference>
<dbReference type="PRO" id="PR:Q9DCF9"/>
<dbReference type="Proteomes" id="UP000000589">
    <property type="component" value="Chromosome 3"/>
</dbReference>
<dbReference type="RNAct" id="Q9DCF9">
    <property type="molecule type" value="protein"/>
</dbReference>
<dbReference type="Bgee" id="ENSMUSG00000027828">
    <property type="expression patterns" value="Expressed in endothelial cell of lymphatic vessel and 266 other cell types or tissues"/>
</dbReference>
<dbReference type="ExpressionAtlas" id="Q9DCF9">
    <property type="expression patterns" value="baseline and differential"/>
</dbReference>
<dbReference type="GO" id="GO:0005789">
    <property type="term" value="C:endoplasmic reticulum membrane"/>
    <property type="evidence" value="ECO:0007669"/>
    <property type="project" value="UniProtKB-SubCell"/>
</dbReference>
<dbReference type="GO" id="GO:0006614">
    <property type="term" value="P:SRP-dependent cotranslational protein targeting to membrane"/>
    <property type="evidence" value="ECO:0007669"/>
    <property type="project" value="InterPro"/>
</dbReference>
<dbReference type="InterPro" id="IPR009779">
    <property type="entry name" value="SSR3"/>
</dbReference>
<dbReference type="PANTHER" id="PTHR13399:SF3">
    <property type="entry name" value="TRANSLOCON-ASSOCIATED PROTEIN SUBUNIT GAMMA"/>
    <property type="match status" value="1"/>
</dbReference>
<dbReference type="PANTHER" id="PTHR13399">
    <property type="entry name" value="TRANSLOCON-ASSOCIATED PROTEIN TRAP , GAMMA SUBUNIT"/>
    <property type="match status" value="1"/>
</dbReference>
<dbReference type="Pfam" id="PF07074">
    <property type="entry name" value="TRAP-gamma"/>
    <property type="match status" value="1"/>
</dbReference>
<proteinExistence type="evidence at protein level"/>
<evidence type="ECO:0000250" key="1"/>
<evidence type="ECO:0000250" key="2">
    <source>
        <dbReference type="UniProtKB" id="Q9UNL2"/>
    </source>
</evidence>
<evidence type="ECO:0000255" key="3"/>
<evidence type="ECO:0000303" key="4">
    <source>
    </source>
</evidence>
<evidence type="ECO:0000305" key="5"/>
<evidence type="ECO:0007744" key="6">
    <source>
    </source>
</evidence>
<evidence type="ECO:0007744" key="7">
    <source>
    </source>
</evidence>
<evidence type="ECO:0007744" key="8">
    <source>
    </source>
</evidence>
<reference key="1">
    <citation type="journal article" date="2005" name="Science">
        <title>The transcriptional landscape of the mammalian genome.</title>
        <authorList>
            <person name="Carninci P."/>
            <person name="Kasukawa T."/>
            <person name="Katayama S."/>
            <person name="Gough J."/>
            <person name="Frith M.C."/>
            <person name="Maeda N."/>
            <person name="Oyama R."/>
            <person name="Ravasi T."/>
            <person name="Lenhard B."/>
            <person name="Wells C."/>
            <person name="Kodzius R."/>
            <person name="Shimokawa K."/>
            <person name="Bajic V.B."/>
            <person name="Brenner S.E."/>
            <person name="Batalov S."/>
            <person name="Forrest A.R."/>
            <person name="Zavolan M."/>
            <person name="Davis M.J."/>
            <person name="Wilming L.G."/>
            <person name="Aidinis V."/>
            <person name="Allen J.E."/>
            <person name="Ambesi-Impiombato A."/>
            <person name="Apweiler R."/>
            <person name="Aturaliya R.N."/>
            <person name="Bailey T.L."/>
            <person name="Bansal M."/>
            <person name="Baxter L."/>
            <person name="Beisel K.W."/>
            <person name="Bersano T."/>
            <person name="Bono H."/>
            <person name="Chalk A.M."/>
            <person name="Chiu K.P."/>
            <person name="Choudhary V."/>
            <person name="Christoffels A."/>
            <person name="Clutterbuck D.R."/>
            <person name="Crowe M.L."/>
            <person name="Dalla E."/>
            <person name="Dalrymple B.P."/>
            <person name="de Bono B."/>
            <person name="Della Gatta G."/>
            <person name="di Bernardo D."/>
            <person name="Down T."/>
            <person name="Engstrom P."/>
            <person name="Fagiolini M."/>
            <person name="Faulkner G."/>
            <person name="Fletcher C.F."/>
            <person name="Fukushima T."/>
            <person name="Furuno M."/>
            <person name="Futaki S."/>
            <person name="Gariboldi M."/>
            <person name="Georgii-Hemming P."/>
            <person name="Gingeras T.R."/>
            <person name="Gojobori T."/>
            <person name="Green R.E."/>
            <person name="Gustincich S."/>
            <person name="Harbers M."/>
            <person name="Hayashi Y."/>
            <person name="Hensch T.K."/>
            <person name="Hirokawa N."/>
            <person name="Hill D."/>
            <person name="Huminiecki L."/>
            <person name="Iacono M."/>
            <person name="Ikeo K."/>
            <person name="Iwama A."/>
            <person name="Ishikawa T."/>
            <person name="Jakt M."/>
            <person name="Kanapin A."/>
            <person name="Katoh M."/>
            <person name="Kawasawa Y."/>
            <person name="Kelso J."/>
            <person name="Kitamura H."/>
            <person name="Kitano H."/>
            <person name="Kollias G."/>
            <person name="Krishnan S.P."/>
            <person name="Kruger A."/>
            <person name="Kummerfeld S.K."/>
            <person name="Kurochkin I.V."/>
            <person name="Lareau L.F."/>
            <person name="Lazarevic D."/>
            <person name="Lipovich L."/>
            <person name="Liu J."/>
            <person name="Liuni S."/>
            <person name="McWilliam S."/>
            <person name="Madan Babu M."/>
            <person name="Madera M."/>
            <person name="Marchionni L."/>
            <person name="Matsuda H."/>
            <person name="Matsuzawa S."/>
            <person name="Miki H."/>
            <person name="Mignone F."/>
            <person name="Miyake S."/>
            <person name="Morris K."/>
            <person name="Mottagui-Tabar S."/>
            <person name="Mulder N."/>
            <person name="Nakano N."/>
            <person name="Nakauchi H."/>
            <person name="Ng P."/>
            <person name="Nilsson R."/>
            <person name="Nishiguchi S."/>
            <person name="Nishikawa S."/>
            <person name="Nori F."/>
            <person name="Ohara O."/>
            <person name="Okazaki Y."/>
            <person name="Orlando V."/>
            <person name="Pang K.C."/>
            <person name="Pavan W.J."/>
            <person name="Pavesi G."/>
            <person name="Pesole G."/>
            <person name="Petrovsky N."/>
            <person name="Piazza S."/>
            <person name="Reed J."/>
            <person name="Reid J.F."/>
            <person name="Ring B.Z."/>
            <person name="Ringwald M."/>
            <person name="Rost B."/>
            <person name="Ruan Y."/>
            <person name="Salzberg S.L."/>
            <person name="Sandelin A."/>
            <person name="Schneider C."/>
            <person name="Schoenbach C."/>
            <person name="Sekiguchi K."/>
            <person name="Semple C.A."/>
            <person name="Seno S."/>
            <person name="Sessa L."/>
            <person name="Sheng Y."/>
            <person name="Shibata Y."/>
            <person name="Shimada H."/>
            <person name="Shimada K."/>
            <person name="Silva D."/>
            <person name="Sinclair B."/>
            <person name="Sperling S."/>
            <person name="Stupka E."/>
            <person name="Sugiura K."/>
            <person name="Sultana R."/>
            <person name="Takenaka Y."/>
            <person name="Taki K."/>
            <person name="Tammoja K."/>
            <person name="Tan S.L."/>
            <person name="Tang S."/>
            <person name="Taylor M.S."/>
            <person name="Tegner J."/>
            <person name="Teichmann S.A."/>
            <person name="Ueda H.R."/>
            <person name="van Nimwegen E."/>
            <person name="Verardo R."/>
            <person name="Wei C.L."/>
            <person name="Yagi K."/>
            <person name="Yamanishi H."/>
            <person name="Zabarovsky E."/>
            <person name="Zhu S."/>
            <person name="Zimmer A."/>
            <person name="Hide W."/>
            <person name="Bult C."/>
            <person name="Grimmond S.M."/>
            <person name="Teasdale R.D."/>
            <person name="Liu E.T."/>
            <person name="Brusic V."/>
            <person name="Quackenbush J."/>
            <person name="Wahlestedt C."/>
            <person name="Mattick J.S."/>
            <person name="Hume D.A."/>
            <person name="Kai C."/>
            <person name="Sasaki D."/>
            <person name="Tomaru Y."/>
            <person name="Fukuda S."/>
            <person name="Kanamori-Katayama M."/>
            <person name="Suzuki M."/>
            <person name="Aoki J."/>
            <person name="Arakawa T."/>
            <person name="Iida J."/>
            <person name="Imamura K."/>
            <person name="Itoh M."/>
            <person name="Kato T."/>
            <person name="Kawaji H."/>
            <person name="Kawagashira N."/>
            <person name="Kawashima T."/>
            <person name="Kojima M."/>
            <person name="Kondo S."/>
            <person name="Konno H."/>
            <person name="Nakano K."/>
            <person name="Ninomiya N."/>
            <person name="Nishio T."/>
            <person name="Okada M."/>
            <person name="Plessy C."/>
            <person name="Shibata K."/>
            <person name="Shiraki T."/>
            <person name="Suzuki S."/>
            <person name="Tagami M."/>
            <person name="Waki K."/>
            <person name="Watahiki A."/>
            <person name="Okamura-Oho Y."/>
            <person name="Suzuki H."/>
            <person name="Kawai J."/>
            <person name="Hayashizaki Y."/>
        </authorList>
    </citation>
    <scope>NUCLEOTIDE SEQUENCE [LARGE SCALE MRNA] (ISOFORMS 1 AND 2)</scope>
    <source>
        <strain>C57BL/6J</strain>
        <strain>NOD</strain>
        <tissue>Head</tissue>
        <tissue>Kidney</tissue>
        <tissue>Liver</tissue>
        <tissue>Thymus</tissue>
    </source>
</reference>
<reference key="2">
    <citation type="journal article" date="2004" name="Genome Res.">
        <title>The status, quality, and expansion of the NIH full-length cDNA project: the Mammalian Gene Collection (MGC).</title>
        <authorList>
            <consortium name="The MGC Project Team"/>
        </authorList>
    </citation>
    <scope>NUCLEOTIDE SEQUENCE [LARGE SCALE MRNA] (ISOFORM 1)</scope>
    <source>
        <strain>FVB/N</strain>
        <tissue>Mammary tumor</tissue>
    </source>
</reference>
<reference key="3">
    <citation type="journal article" date="2007" name="Proc. Natl. Acad. Sci. U.S.A.">
        <title>Large-scale phosphorylation analysis of mouse liver.</title>
        <authorList>
            <person name="Villen J."/>
            <person name="Beausoleil S.A."/>
            <person name="Gerber S.A."/>
            <person name="Gygi S.P."/>
        </authorList>
    </citation>
    <scope>PHOSPHORYLATION [LARGE SCALE ANALYSIS] AT SER-11</scope>
    <scope>IDENTIFICATION BY MASS SPECTROMETRY [LARGE SCALE ANALYSIS]</scope>
    <source>
        <tissue>Liver</tissue>
    </source>
</reference>
<reference key="4">
    <citation type="journal article" date="2009" name="Immunity">
        <title>The phagosomal proteome in interferon-gamma-activated macrophages.</title>
        <authorList>
            <person name="Trost M."/>
            <person name="English L."/>
            <person name="Lemieux S."/>
            <person name="Courcelles M."/>
            <person name="Desjardins M."/>
            <person name="Thibault P."/>
        </authorList>
    </citation>
    <scope>PHOSPHORYLATION [LARGE SCALE ANALYSIS] AT SER-105</scope>
    <scope>IDENTIFICATION BY MASS SPECTROMETRY [LARGE SCALE ANALYSIS]</scope>
</reference>
<reference key="5">
    <citation type="journal article" date="2010" name="Cell">
        <title>A tissue-specific atlas of mouse protein phosphorylation and expression.</title>
        <authorList>
            <person name="Huttlin E.L."/>
            <person name="Jedrychowski M.P."/>
            <person name="Elias J.E."/>
            <person name="Goswami T."/>
            <person name="Rad R."/>
            <person name="Beausoleil S.A."/>
            <person name="Villen J."/>
            <person name="Haas W."/>
            <person name="Sowa M.E."/>
            <person name="Gygi S.P."/>
        </authorList>
    </citation>
    <scope>PHOSPHORYLATION [LARGE SCALE ANALYSIS] AT SER-7 AND SER-11</scope>
    <scope>IDENTIFICATION BY MASS SPECTROMETRY [LARGE SCALE ANALYSIS]</scope>
    <source>
        <tissue>Brain</tissue>
        <tissue>Brown adipose tissue</tissue>
        <tissue>Heart</tissue>
        <tissue>Kidney</tissue>
        <tissue>Liver</tissue>
        <tissue>Lung</tissue>
        <tissue>Pancreas</tissue>
        <tissue>Spleen</tissue>
        <tissue>Testis</tissue>
    </source>
</reference>
<name>SSRG_MOUSE</name>
<feature type="chain" id="PRO_0000191691" description="Translocon-associated protein subunit gamma">
    <location>
        <begin position="1"/>
        <end position="185"/>
    </location>
</feature>
<feature type="topological domain" description="Lumenal" evidence="3">
    <location>
        <begin position="1"/>
        <end position="27"/>
    </location>
</feature>
<feature type="transmembrane region" description="Helical" evidence="3">
    <location>
        <begin position="28"/>
        <end position="48"/>
    </location>
</feature>
<feature type="topological domain" description="Cytoplasmic" evidence="3">
    <location>
        <begin position="49"/>
        <end position="54"/>
    </location>
</feature>
<feature type="transmembrane region" description="Helical" evidence="3">
    <location>
        <begin position="55"/>
        <end position="76"/>
    </location>
</feature>
<feature type="topological domain" description="Lumenal" evidence="3">
    <location>
        <begin position="77"/>
        <end position="135"/>
    </location>
</feature>
<feature type="transmembrane region" description="Helical" evidence="3">
    <location>
        <begin position="136"/>
        <end position="157"/>
    </location>
</feature>
<feature type="topological domain" description="Cytoplasmic" evidence="3">
    <location>
        <begin position="158"/>
        <end position="163"/>
    </location>
</feature>
<feature type="transmembrane region" description="Helical" evidence="3">
    <location>
        <begin position="164"/>
        <end position="184"/>
    </location>
</feature>
<feature type="modified residue" description="N-acetylmethionine" evidence="2">
    <location>
        <position position="1"/>
    </location>
</feature>
<feature type="modified residue" description="Phosphoserine" evidence="8">
    <location>
        <position position="7"/>
    </location>
</feature>
<feature type="modified residue" description="Phosphoserine" evidence="6 8">
    <location>
        <position position="11"/>
    </location>
</feature>
<feature type="modified residue" description="Phosphoserine" evidence="7">
    <location>
        <position position="105"/>
    </location>
</feature>
<feature type="splice variant" id="VSP_013474" description="In isoform 2." evidence="4">
    <original>NYILSISASSGLIAL</original>
    <variation>YPLESFPINSSLLCF</variation>
    <location>
        <begin position="165"/>
        <end position="179"/>
    </location>
</feature>
<feature type="splice variant" id="VSP_013475" description="In isoform 2." evidence="4">
    <location>
        <begin position="180"/>
        <end position="185"/>
    </location>
</feature>
<comment type="function">
    <text evidence="1">TRAP proteins are part of a complex whose function is to bind calcium to the ER membrane and thereby regulate the retention of ER resident proteins.</text>
</comment>
<comment type="subunit">
    <text>Heterotetramer of TRAP-alpha, TRAP-beta, TRAP-delta and TRAP-gamma.</text>
</comment>
<comment type="subcellular location">
    <subcellularLocation>
        <location evidence="1">Endoplasmic reticulum membrane</location>
        <topology evidence="1">Multi-pass membrane protein</topology>
    </subcellularLocation>
</comment>
<comment type="alternative products">
    <event type="alternative splicing"/>
    <isoform>
        <id>Q9DCF9-1</id>
        <name>1</name>
        <sequence type="displayed"/>
    </isoform>
    <isoform>
        <id>Q9DCF9-2</id>
        <name>2</name>
        <sequence type="described" ref="VSP_013474 VSP_013475"/>
    </isoform>
</comment>
<comment type="similarity">
    <text evidence="5">Belongs to the TRAP-gamma family.</text>
</comment>
<sequence length="185" mass="21064">MAPKGGSKQQSEEDLLLQDFSRNLSAKSSALFFGNAFIVSAIPIWLYWRIWHMDLIQSAVLYSVMTLVSTYLVAFAYKNVKFVLKHKVAQKREDAVSKEVTRKLSEADNRKMSRKEKDERILWKKNEVADYEATTFSIFYNNTLFLVLVIVASFFILKNFNPTVNYILSISASSGLIALLSTGSK</sequence>
<protein>
    <recommendedName>
        <fullName>Translocon-associated protein subunit gamma</fullName>
        <shortName>TRAP-gamma</shortName>
    </recommendedName>
    <alternativeName>
        <fullName>Signal sequence receptor subunit gamma</fullName>
        <shortName>SSR-gamma</shortName>
    </alternativeName>
</protein>
<gene>
    <name type="primary">Ssr3</name>
</gene>